<organism>
    <name type="scientific">Synechocystis sp. (strain ATCC 27184 / PCC 6803 / Kazusa)</name>
    <dbReference type="NCBI Taxonomy" id="1111708"/>
    <lineage>
        <taxon>Bacteria</taxon>
        <taxon>Bacillati</taxon>
        <taxon>Cyanobacteriota</taxon>
        <taxon>Cyanophyceae</taxon>
        <taxon>Synechococcales</taxon>
        <taxon>Merismopediaceae</taxon>
        <taxon>Synechocystis</taxon>
    </lineage>
</organism>
<protein>
    <recommendedName>
        <fullName>UPF0053 protein sll1254</fullName>
    </recommendedName>
</protein>
<gene>
    <name type="ordered locus">sll1254</name>
</gene>
<feature type="chain" id="PRO_0000088384" description="UPF0053 protein sll1254">
    <location>
        <begin position="1"/>
        <end position="346"/>
    </location>
</feature>
<feature type="transmembrane region" description="Helical" evidence="1">
    <location>
        <begin position="1"/>
        <end position="21"/>
    </location>
</feature>
<feature type="transmembrane region" description="Helical" evidence="1">
    <location>
        <begin position="58"/>
        <end position="78"/>
    </location>
</feature>
<feature type="transmembrane region" description="Helical" evidence="1">
    <location>
        <begin position="87"/>
        <end position="107"/>
    </location>
</feature>
<feature type="transmembrane region" description="Helical" evidence="1">
    <location>
        <begin position="121"/>
        <end position="141"/>
    </location>
</feature>
<feature type="domain" description="CNNM transmembrane" evidence="3">
    <location>
        <begin position="1"/>
        <end position="179"/>
    </location>
</feature>
<feature type="domain" description="CBS 1" evidence="2">
    <location>
        <begin position="198"/>
        <end position="259"/>
    </location>
</feature>
<feature type="domain" description="CBS 2" evidence="2">
    <location>
        <begin position="263"/>
        <end position="320"/>
    </location>
</feature>
<keyword id="KW-0129">CBS domain</keyword>
<keyword id="KW-1003">Cell membrane</keyword>
<keyword id="KW-0472">Membrane</keyword>
<keyword id="KW-1185">Reference proteome</keyword>
<keyword id="KW-0677">Repeat</keyword>
<keyword id="KW-0812">Transmembrane</keyword>
<keyword id="KW-1133">Transmembrane helix</keyword>
<proteinExistence type="inferred from homology"/>
<reference key="1">
    <citation type="journal article" date="1996" name="DNA Res.">
        <title>Sequence analysis of the genome of the unicellular cyanobacterium Synechocystis sp. strain PCC6803. II. Sequence determination of the entire genome and assignment of potential protein-coding regions.</title>
        <authorList>
            <person name="Kaneko T."/>
            <person name="Sato S."/>
            <person name="Kotani H."/>
            <person name="Tanaka A."/>
            <person name="Asamizu E."/>
            <person name="Nakamura Y."/>
            <person name="Miyajima N."/>
            <person name="Hirosawa M."/>
            <person name="Sugiura M."/>
            <person name="Sasamoto S."/>
            <person name="Kimura T."/>
            <person name="Hosouchi T."/>
            <person name="Matsuno A."/>
            <person name="Muraki A."/>
            <person name="Nakazaki N."/>
            <person name="Naruo K."/>
            <person name="Okumura S."/>
            <person name="Shimpo S."/>
            <person name="Takeuchi C."/>
            <person name="Wada T."/>
            <person name="Watanabe A."/>
            <person name="Yamada M."/>
            <person name="Yasuda M."/>
            <person name="Tabata S."/>
        </authorList>
    </citation>
    <scope>NUCLEOTIDE SEQUENCE [LARGE SCALE GENOMIC DNA]</scope>
    <source>
        <strain>ATCC 27184 / PCC 6803 / Kazusa</strain>
    </source>
</reference>
<accession>P74078</accession>
<name>Y1254_SYNY3</name>
<dbReference type="EMBL" id="BA000022">
    <property type="protein sequence ID" value="BAA18156.1"/>
    <property type="molecule type" value="Genomic_DNA"/>
</dbReference>
<dbReference type="PIR" id="S75595">
    <property type="entry name" value="S75595"/>
</dbReference>
<dbReference type="SMR" id="P74078"/>
<dbReference type="STRING" id="1148.gene:10499029"/>
<dbReference type="PaxDb" id="1148-1653241"/>
<dbReference type="EnsemblBacteria" id="BAA18156">
    <property type="protein sequence ID" value="BAA18156"/>
    <property type="gene ID" value="BAA18156"/>
</dbReference>
<dbReference type="KEGG" id="syn:sll1254"/>
<dbReference type="eggNOG" id="COG1253">
    <property type="taxonomic scope" value="Bacteria"/>
</dbReference>
<dbReference type="InParanoid" id="P74078"/>
<dbReference type="PhylomeDB" id="P74078"/>
<dbReference type="Proteomes" id="UP000001425">
    <property type="component" value="Chromosome"/>
</dbReference>
<dbReference type="GO" id="GO:0005886">
    <property type="term" value="C:plasma membrane"/>
    <property type="evidence" value="ECO:0000318"/>
    <property type="project" value="GO_Central"/>
</dbReference>
<dbReference type="CDD" id="cd04590">
    <property type="entry name" value="CBS_pair_CorC_HlyC_assoc"/>
    <property type="match status" value="1"/>
</dbReference>
<dbReference type="FunFam" id="3.10.580.10:FF:000002">
    <property type="entry name" value="Magnesium/cobalt efflux protein CorC"/>
    <property type="match status" value="1"/>
</dbReference>
<dbReference type="Gene3D" id="3.10.580.10">
    <property type="entry name" value="CBS-domain"/>
    <property type="match status" value="1"/>
</dbReference>
<dbReference type="InterPro" id="IPR000644">
    <property type="entry name" value="CBS_dom"/>
</dbReference>
<dbReference type="InterPro" id="IPR046342">
    <property type="entry name" value="CBS_dom_sf"/>
</dbReference>
<dbReference type="InterPro" id="IPR002550">
    <property type="entry name" value="CNNM"/>
</dbReference>
<dbReference type="InterPro" id="IPR044751">
    <property type="entry name" value="Ion_transp-like_CBS"/>
</dbReference>
<dbReference type="PANTHER" id="PTHR22777">
    <property type="entry name" value="HEMOLYSIN-RELATED"/>
    <property type="match status" value="1"/>
</dbReference>
<dbReference type="PANTHER" id="PTHR22777:SF4">
    <property type="entry name" value="UPF0053 PROTEIN SLL1254"/>
    <property type="match status" value="1"/>
</dbReference>
<dbReference type="Pfam" id="PF00571">
    <property type="entry name" value="CBS"/>
    <property type="match status" value="1"/>
</dbReference>
<dbReference type="Pfam" id="PF01595">
    <property type="entry name" value="CNNM"/>
    <property type="match status" value="1"/>
</dbReference>
<dbReference type="SUPFAM" id="SSF54631">
    <property type="entry name" value="CBS-domain pair"/>
    <property type="match status" value="1"/>
</dbReference>
<dbReference type="PROSITE" id="PS51371">
    <property type="entry name" value="CBS"/>
    <property type="match status" value="2"/>
</dbReference>
<dbReference type="PROSITE" id="PS51846">
    <property type="entry name" value="CNNM"/>
    <property type="match status" value="1"/>
</dbReference>
<evidence type="ECO:0000255" key="1"/>
<evidence type="ECO:0000255" key="2">
    <source>
        <dbReference type="PROSITE-ProRule" id="PRU00703"/>
    </source>
</evidence>
<evidence type="ECO:0000255" key="3">
    <source>
        <dbReference type="PROSITE-ProRule" id="PRU01193"/>
    </source>
</evidence>
<evidence type="ECO:0000305" key="4"/>
<comment type="subcellular location">
    <subcellularLocation>
        <location evidence="4">Cell membrane</location>
        <topology evidence="4">Multi-pass membrane protein</topology>
    </subcellularLocation>
</comment>
<comment type="similarity">
    <text evidence="4">Belongs to the UPF0053 family.</text>
</comment>
<sequence length="346" mass="38343">MLEIVAAIFIVLLGSGICSCAEAALFSVPLVKVRQLSQSNNPSAIALQAIRHRMNRPIGTIVVLNNIFNIVGSITIGALATKHLQDAWMGVFSGILTLLIIVFGEIIPKTLGERYATNIALLIAIPVRFLTLIFTPLVWLIEQITNPFTHGKRVPSTNEAEIKFLATLGYKEGVIEGDEEQMIQRVFQLNDLMAVDLMTPRVIITYLLGELTLAECQQDIIQSQHTRILIVDEYIDEVLGIALKQDLLTALIQGEGYKTIAELARPAQFVPEGMRADKLLKQFQEKREHLMVVIDEYGGVAGVITLEDVVEVLTGEIVDETDKNIDLQEIARKKRQALLKQRGVAP</sequence>